<protein>
    <recommendedName>
        <fullName>Aminoacyl tRNA synthase complex-interacting multifunctional protein 2</fullName>
    </recommendedName>
    <alternativeName>
        <fullName evidence="7">Multisynthase complex auxiliary component p38</fullName>
    </alternativeName>
    <alternativeName>
        <fullName>Protein JTV-1</fullName>
    </alternativeName>
</protein>
<organism>
    <name type="scientific">Mus musculus</name>
    <name type="common">Mouse</name>
    <dbReference type="NCBI Taxonomy" id="10090"/>
    <lineage>
        <taxon>Eukaryota</taxon>
        <taxon>Metazoa</taxon>
        <taxon>Chordata</taxon>
        <taxon>Craniata</taxon>
        <taxon>Vertebrata</taxon>
        <taxon>Euteleostomi</taxon>
        <taxon>Mammalia</taxon>
        <taxon>Eutheria</taxon>
        <taxon>Euarchontoglires</taxon>
        <taxon>Glires</taxon>
        <taxon>Rodentia</taxon>
        <taxon>Myomorpha</taxon>
        <taxon>Muroidea</taxon>
        <taxon>Muridae</taxon>
        <taxon>Murinae</taxon>
        <taxon>Mus</taxon>
        <taxon>Mus</taxon>
    </lineage>
</organism>
<name>AIMP2_MOUSE</name>
<proteinExistence type="evidence at protein level"/>
<keyword id="KW-0053">Apoptosis</keyword>
<keyword id="KW-0963">Cytoplasm</keyword>
<keyword id="KW-0217">Developmental protein</keyword>
<keyword id="KW-0221">Differentiation</keyword>
<keyword id="KW-0539">Nucleus</keyword>
<keyword id="KW-0597">Phosphoprotein</keyword>
<keyword id="KW-0648">Protein biosynthesis</keyword>
<keyword id="KW-1185">Reference proteome</keyword>
<keyword id="KW-0832">Ubl conjugation</keyword>
<accession>Q8R010</accession>
<accession>E9QP67</accession>
<accession>Q8R2Y6</accession>
<sequence length="320" mass="35378">MPMYQVKPYHGGSAPLHVELPTCMYRLPNVHSKTTSPATDAGHVQETSEPSLQALESRQDDILKRLYELKAAVDGLSKMIHTPDADLDVTNILQADEPTTLATNTLDLNSVLGKDYGALKDIVINANPASPPLSLLVLHRLLCERYRVLSTVHTHSSVKNVPENLVKCFGEQARKQSRHEYQLGFTLIWKNVPKTQMKFSVQTMCPIEGEGNIARFLFSLFGQKHNAVTLTLIDSWVDIAMFQLREGSSKEKAAVFRSMNSALGRSPWLVGNELTVADVVLWSVLQQTGGSSGAAPTNVQRWLKSCENLAPFSTALQLLK</sequence>
<reference key="1">
    <citation type="journal article" date="2009" name="PLoS Biol.">
        <title>Lineage-specific biology revealed by a finished genome assembly of the mouse.</title>
        <authorList>
            <person name="Church D.M."/>
            <person name="Goodstadt L."/>
            <person name="Hillier L.W."/>
            <person name="Zody M.C."/>
            <person name="Goldstein S."/>
            <person name="She X."/>
            <person name="Bult C.J."/>
            <person name="Agarwala R."/>
            <person name="Cherry J.L."/>
            <person name="DiCuccio M."/>
            <person name="Hlavina W."/>
            <person name="Kapustin Y."/>
            <person name="Meric P."/>
            <person name="Maglott D."/>
            <person name="Birtle Z."/>
            <person name="Marques A.C."/>
            <person name="Graves T."/>
            <person name="Zhou S."/>
            <person name="Teague B."/>
            <person name="Potamousis K."/>
            <person name="Churas C."/>
            <person name="Place M."/>
            <person name="Herschleb J."/>
            <person name="Runnheim R."/>
            <person name="Forrest D."/>
            <person name="Amos-Landgraf J."/>
            <person name="Schwartz D.C."/>
            <person name="Cheng Z."/>
            <person name="Lindblad-Toh K."/>
            <person name="Eichler E.E."/>
            <person name="Ponting C.P."/>
        </authorList>
    </citation>
    <scope>NUCLEOTIDE SEQUENCE [LARGE SCALE GENOMIC DNA]</scope>
    <source>
        <strain>C57BL/6J</strain>
    </source>
</reference>
<reference key="2">
    <citation type="journal article" date="2004" name="Genome Res.">
        <title>The status, quality, and expansion of the NIH full-length cDNA project: the Mammalian Gene Collection (MGC).</title>
        <authorList>
            <consortium name="The MGC Project Team"/>
        </authorList>
    </citation>
    <scope>NUCLEOTIDE SEQUENCE [LARGE SCALE MRNA]</scope>
    <source>
        <strain>Czech II</strain>
        <strain>FVB/N</strain>
        <strain>FVB/N-3</strain>
        <tissue>Mammary tumor</tissue>
    </source>
</reference>
<reference key="3">
    <citation type="journal article" date="2002" name="Proc. Natl. Acad. Sci. U.S.A.">
        <title>p38 is essential for the assembly and stability of macromolecular tRNA synthetase complex: implications for its physiological significance.</title>
        <authorList>
            <person name="Kim J.Y."/>
            <person name="Kang Y.-S."/>
            <person name="Lee J.-W."/>
            <person name="Kim H.J."/>
            <person name="Ahn Y.H."/>
            <person name="Park H."/>
            <person name="Ko Y.-G."/>
            <person name="Kim S."/>
        </authorList>
    </citation>
    <scope>FUNCTION</scope>
    <scope>SUBUNIT</scope>
    <scope>DISRUPTION PHENOTYPE</scope>
</reference>
<reference key="4">
    <citation type="journal article" date="2003" name="Nat. Genet.">
        <title>Downregulation of FUSE-binding protein and c-myc by tRNA synthetase cofactor p38 is required for lung cell differentiation.</title>
        <authorList>
            <person name="Kim M.J."/>
            <person name="Park B.-J."/>
            <person name="Kang Y.-S."/>
            <person name="Kim H.J."/>
            <person name="Park J.-H."/>
            <person name="Kang J.W."/>
            <person name="Lee S.W."/>
            <person name="Han J.M."/>
            <person name="Lee H.-W."/>
            <person name="Kim S."/>
        </authorList>
    </citation>
    <scope>FUNCTION</scope>
    <scope>DISRUPTION PHENOTYPE</scope>
</reference>
<reference key="5">
    <citation type="journal article" date="2005" name="J. Neurosci.">
        <title>Accumulation of the authentic parkin substrate aminoacyl-tRNA synthetase cofactor, p38/JTV-1, leads to catecholaminergic cell death.</title>
        <authorList>
            <person name="Ko H.S."/>
            <person name="von Coelln R."/>
            <person name="Sriram S.R."/>
            <person name="Kim S.W."/>
            <person name="Chung K.K.K."/>
            <person name="Pletnikova O."/>
            <person name="Troncoso J."/>
            <person name="Johnson B."/>
            <person name="Saffary R."/>
            <person name="Goh E.L."/>
            <person name="Song H."/>
            <person name="Park B.-J."/>
            <person name="Kim M.J."/>
            <person name="Kim S."/>
            <person name="Dawson V.L."/>
            <person name="Dawson T.M."/>
        </authorList>
    </citation>
    <scope>FUNCTION</scope>
</reference>
<reference key="6">
    <citation type="journal article" date="2007" name="Proc. Natl. Acad. Sci. U.S.A.">
        <title>Large-scale phosphorylation analysis of mouse liver.</title>
        <authorList>
            <person name="Villen J."/>
            <person name="Beausoleil S.A."/>
            <person name="Gerber S.A."/>
            <person name="Gygi S.P."/>
        </authorList>
    </citation>
    <scope>IDENTIFICATION BY MASS SPECTROMETRY [LARGE SCALE ANALYSIS]</scope>
    <source>
        <tissue>Liver</tissue>
    </source>
</reference>
<reference key="7">
    <citation type="journal article" date="2008" name="Proc. Natl. Acad. Sci. U.S.A.">
        <title>AIMP2/p38, the scaffold for the multi-tRNA synthetase complex, responds to genotoxic stresses via p53.</title>
        <authorList>
            <person name="Han J.M."/>
            <person name="Park B.-J."/>
            <person name="Park S.G."/>
            <person name="Oh Y.S."/>
            <person name="Choi S.J."/>
            <person name="Lee S.W."/>
            <person name="Hwang S.-K."/>
            <person name="Chang S.-H."/>
            <person name="Cho M.-H."/>
            <person name="Kim S."/>
        </authorList>
    </citation>
    <scope>FUNCTION</scope>
    <scope>SUBCELLULAR LOCATION</scope>
    <scope>PHOSPHORYLATION</scope>
</reference>
<reference key="8">
    <citation type="journal article" date="2010" name="Cell">
        <title>A tissue-specific atlas of mouse protein phosphorylation and expression.</title>
        <authorList>
            <person name="Huttlin E.L."/>
            <person name="Jedrychowski M.P."/>
            <person name="Elias J.E."/>
            <person name="Goswami T."/>
            <person name="Rad R."/>
            <person name="Beausoleil S.A."/>
            <person name="Villen J."/>
            <person name="Haas W."/>
            <person name="Sowa M.E."/>
            <person name="Gygi S.P."/>
        </authorList>
    </citation>
    <scope>PHOSPHORYLATION [LARGE SCALE ANALYSIS] AT SER-36</scope>
    <scope>IDENTIFICATION BY MASS SPECTROMETRY [LARGE SCALE ANALYSIS]</scope>
    <source>
        <tissue>Brain</tissue>
        <tissue>Brown adipose tissue</tissue>
        <tissue>Heart</tissue>
        <tissue>Kidney</tissue>
        <tissue>Liver</tissue>
        <tissue>Lung</tissue>
        <tissue>Pancreas</tissue>
        <tissue>Spleen</tissue>
        <tissue>Testis</tissue>
    </source>
</reference>
<gene>
    <name type="primary">Aimp2</name>
    <name type="synonym">Jtv1</name>
</gene>
<feature type="chain" id="PRO_0000316841" description="Aminoacyl tRNA synthase complex-interacting multifunctional protein 2">
    <location>
        <begin position="1"/>
        <end position="320"/>
    </location>
</feature>
<feature type="domain" description="GST C-terminal">
    <location>
        <begin position="220"/>
        <end position="317"/>
    </location>
</feature>
<feature type="region of interest" description="Interaction with PRKN" evidence="1">
    <location>
        <begin position="82"/>
        <end position="162"/>
    </location>
</feature>
<feature type="region of interest" description="Interaction with TP53" evidence="1">
    <location>
        <begin position="162"/>
        <end position="225"/>
    </location>
</feature>
<feature type="modified residue" description="Phosphoserine" evidence="9">
    <location>
        <position position="36"/>
    </location>
</feature>
<feature type="sequence conflict" description="In Ref. 2; AAH26958." evidence="8" ref="2">
    <original>H</original>
    <variation>R</variation>
    <location>
        <position position="17"/>
    </location>
</feature>
<feature type="sequence conflict" description="In Ref. 2; AAH24410/AAH26958/AAH26972." evidence="8" ref="2">
    <original>S</original>
    <variation>N</variation>
    <location>
        <position position="36"/>
    </location>
</feature>
<comment type="function">
    <text evidence="3 4 5 6">Required for assembly and stability of the aminoacyl-tRNA synthase complex (PubMed:12060739). Mediates ubiquitination and degradation of FUBP1, a transcriptional activator of MYC, leading to MYC down-regulation which is required for aveolar type II cell differentiation (PubMed:12819782). Blocks MDM2-mediated ubiquitination and degradation of p53/TP53 (PubMed:18695251). Functions as a proapoptotic factor (PubMed:16135753).</text>
</comment>
<comment type="subunit">
    <text evidence="2 3">Part of the multisynthetase complex (MSC), a multisubunit complex that groups tRNA ligases for Arg (RARS1), Asp (DARS1), Gln (QARS1), Ile (IARS1), Leu (LARS1), Lys (KARS1), Met (MARS1) the bifunctional ligase for Glu and Pro (EPRS1) and the auxiliary subunits AIMP1/p43, AIMP2/p38 and EEF1E1/p18 (PubMed:12060739). Interacts (via N-terminus) with KARS1. Interacts with EPRS1. Forms a linear complex that contains MARS1, EEF1E1, EPRS1 and AIMP2 that is at the core of the multisubunit complex. Binds FUBP1 (via C-terminus) (By similarity). Interacts in both its unphosphorylated and phosphorylated forms with p53/TP53 (via N-terminus) in the nucleus following UV irradiation. Interacts (via N-terminus) with PRKN/parkin (via first RING-type domain). Interacts with TARS3.</text>
</comment>
<comment type="subcellular location">
    <subcellularLocation>
        <location evidence="6">Cytoplasm</location>
        <location evidence="6">Cytosol</location>
    </subcellularLocation>
    <subcellularLocation>
        <location evidence="6">Nucleus</location>
    </subcellularLocation>
    <text evidence="6">Following DNA damage, dissociates from the aminoacyl-tRNA synthase complex and translocates from the cytoplasm to the nucleus.</text>
</comment>
<comment type="PTM">
    <text evidence="6">Phosphorylated on serine residues in response to UV irradiation.</text>
</comment>
<comment type="PTM">
    <text evidence="1">Ubiquitinated by PRKN, leading to its degradation by the proteasome.</text>
</comment>
<comment type="disruption phenotype">
    <text evidence="3 4">Reduced levels of component enzymes and associated factors of the aminoacyl-tRNA synthase complex, lack of complex formation and lethality within two days of birth. Neonates display severe hyperplasia in a number of organs including lung, intestine and liver, lung failure, and disturbed thymocyte proliferation and differentiation. Embryonic fibroblasts deficient in Aimp2 are resistant to apoptosis following UV irradiation.</text>
</comment>
<evidence type="ECO:0000250" key="1"/>
<evidence type="ECO:0000250" key="2">
    <source>
        <dbReference type="UniProtKB" id="Q13155"/>
    </source>
</evidence>
<evidence type="ECO:0000269" key="3">
    <source>
    </source>
</evidence>
<evidence type="ECO:0000269" key="4">
    <source>
    </source>
</evidence>
<evidence type="ECO:0000269" key="5">
    <source>
    </source>
</evidence>
<evidence type="ECO:0000269" key="6">
    <source>
    </source>
</evidence>
<evidence type="ECO:0000303" key="7">
    <source>
    </source>
</evidence>
<evidence type="ECO:0000305" key="8"/>
<evidence type="ECO:0007744" key="9">
    <source>
    </source>
</evidence>
<dbReference type="EMBL" id="AC121917">
    <property type="status" value="NOT_ANNOTATED_CDS"/>
    <property type="molecule type" value="Genomic_DNA"/>
</dbReference>
<dbReference type="EMBL" id="AC166900">
    <property type="status" value="NOT_ANNOTATED_CDS"/>
    <property type="molecule type" value="Genomic_DNA"/>
</dbReference>
<dbReference type="EMBL" id="BC024410">
    <property type="protein sequence ID" value="AAH24410.1"/>
    <property type="molecule type" value="mRNA"/>
</dbReference>
<dbReference type="EMBL" id="BC026958">
    <property type="protein sequence ID" value="AAH26958.1"/>
    <property type="molecule type" value="mRNA"/>
</dbReference>
<dbReference type="EMBL" id="BC026972">
    <property type="protein sequence ID" value="AAH26972.1"/>
    <property type="molecule type" value="mRNA"/>
</dbReference>
<dbReference type="CCDS" id="CCDS51692.1"/>
<dbReference type="RefSeq" id="NP_001165617.1">
    <property type="nucleotide sequence ID" value="NM_001172146.1"/>
</dbReference>
<dbReference type="SMR" id="Q8R010"/>
<dbReference type="BioGRID" id="231187">
    <property type="interactions" value="21"/>
</dbReference>
<dbReference type="FunCoup" id="Q8R010">
    <property type="interactions" value="2420"/>
</dbReference>
<dbReference type="STRING" id="10090.ENSMUSP00000031613"/>
<dbReference type="MoonProt" id="Q8R010"/>
<dbReference type="GlyGen" id="Q8R010">
    <property type="glycosylation" value="1 site, 1 O-linked glycan (1 site)"/>
</dbReference>
<dbReference type="iPTMnet" id="Q8R010"/>
<dbReference type="PhosphoSitePlus" id="Q8R010"/>
<dbReference type="SwissPalm" id="Q8R010"/>
<dbReference type="jPOST" id="Q8R010"/>
<dbReference type="PaxDb" id="10090-ENSMUSP00000031613"/>
<dbReference type="PeptideAtlas" id="Q8R010"/>
<dbReference type="ProteomicsDB" id="285788"/>
<dbReference type="Pumba" id="Q8R010"/>
<dbReference type="Antibodypedia" id="11563">
    <property type="antibodies" value="206 antibodies from 32 providers"/>
</dbReference>
<dbReference type="DNASU" id="231872"/>
<dbReference type="Ensembl" id="ENSMUST00000031613.11">
    <property type="protein sequence ID" value="ENSMUSP00000031613.5"/>
    <property type="gene ID" value="ENSMUSG00000029610.14"/>
</dbReference>
<dbReference type="GeneID" id="231872"/>
<dbReference type="KEGG" id="mmu:231872"/>
<dbReference type="UCSC" id="uc009akw.2">
    <property type="organism name" value="mouse"/>
</dbReference>
<dbReference type="AGR" id="MGI:2385237"/>
<dbReference type="CTD" id="7965"/>
<dbReference type="MGI" id="MGI:2385237">
    <property type="gene designation" value="Aimp2"/>
</dbReference>
<dbReference type="VEuPathDB" id="HostDB:ENSMUSG00000029610"/>
<dbReference type="eggNOG" id="ENOG502QUNJ">
    <property type="taxonomic scope" value="Eukaryota"/>
</dbReference>
<dbReference type="GeneTree" id="ENSGT00390000015826"/>
<dbReference type="InParanoid" id="Q8R010"/>
<dbReference type="OMA" id="LCQHYRV"/>
<dbReference type="OrthoDB" id="2309723at2759"/>
<dbReference type="PhylomeDB" id="Q8R010"/>
<dbReference type="TreeFam" id="TF326322"/>
<dbReference type="Reactome" id="R-MMU-9856649">
    <property type="pathway name" value="Transcriptional and post-translational regulation of MITF-M expression and activity"/>
</dbReference>
<dbReference type="BioGRID-ORCS" id="231872">
    <property type="hits" value="3 hits in 80 CRISPR screens"/>
</dbReference>
<dbReference type="ChiTaRS" id="Aimp2">
    <property type="organism name" value="mouse"/>
</dbReference>
<dbReference type="PRO" id="PR:Q8R010"/>
<dbReference type="Proteomes" id="UP000000589">
    <property type="component" value="Chromosome 5"/>
</dbReference>
<dbReference type="RNAct" id="Q8R010">
    <property type="molecule type" value="protein"/>
</dbReference>
<dbReference type="Bgee" id="ENSMUSG00000029610">
    <property type="expression patterns" value="Expressed in triceps brachii and 281 other cell types or tissues"/>
</dbReference>
<dbReference type="ExpressionAtlas" id="Q8R010">
    <property type="expression patterns" value="baseline and differential"/>
</dbReference>
<dbReference type="GO" id="GO:0017101">
    <property type="term" value="C:aminoacyl-tRNA synthetase multienzyme complex"/>
    <property type="evidence" value="ECO:0000315"/>
    <property type="project" value="CAFA"/>
</dbReference>
<dbReference type="GO" id="GO:0005829">
    <property type="term" value="C:cytosol"/>
    <property type="evidence" value="ECO:0007669"/>
    <property type="project" value="UniProtKB-SubCell"/>
</dbReference>
<dbReference type="GO" id="GO:0005634">
    <property type="term" value="C:nucleus"/>
    <property type="evidence" value="ECO:0000314"/>
    <property type="project" value="MGI"/>
</dbReference>
<dbReference type="GO" id="GO:0060090">
    <property type="term" value="F:molecular adaptor activity"/>
    <property type="evidence" value="ECO:0000315"/>
    <property type="project" value="CAFA"/>
</dbReference>
<dbReference type="GO" id="GO:0006915">
    <property type="term" value="P:apoptotic process"/>
    <property type="evidence" value="ECO:0007669"/>
    <property type="project" value="UniProtKB-KW"/>
</dbReference>
<dbReference type="GO" id="GO:0008285">
    <property type="term" value="P:negative regulation of cell population proliferation"/>
    <property type="evidence" value="ECO:0000314"/>
    <property type="project" value="MGI"/>
</dbReference>
<dbReference type="GO" id="GO:0043525">
    <property type="term" value="P:positive regulation of neuron apoptotic process"/>
    <property type="evidence" value="ECO:0000266"/>
    <property type="project" value="MGI"/>
</dbReference>
<dbReference type="GO" id="GO:0031398">
    <property type="term" value="P:positive regulation of protein ubiquitination"/>
    <property type="evidence" value="ECO:0000314"/>
    <property type="project" value="MGI"/>
</dbReference>
<dbReference type="GO" id="GO:0016567">
    <property type="term" value="P:protein ubiquitination"/>
    <property type="evidence" value="ECO:0000314"/>
    <property type="project" value="MGI"/>
</dbReference>
<dbReference type="GO" id="GO:0065003">
    <property type="term" value="P:protein-containing complex assembly"/>
    <property type="evidence" value="ECO:0000315"/>
    <property type="project" value="CAFA"/>
</dbReference>
<dbReference type="GO" id="GO:0006412">
    <property type="term" value="P:translation"/>
    <property type="evidence" value="ECO:0007669"/>
    <property type="project" value="UniProtKB-KW"/>
</dbReference>
<dbReference type="GO" id="GO:0060510">
    <property type="term" value="P:type II pneumocyte differentiation"/>
    <property type="evidence" value="ECO:0000315"/>
    <property type="project" value="MGI"/>
</dbReference>
<dbReference type="CDD" id="cd03200">
    <property type="entry name" value="GST_C_AIMP2"/>
    <property type="match status" value="1"/>
</dbReference>
<dbReference type="FunFam" id="1.20.1050.130:FF:000002">
    <property type="entry name" value="aminoacyl tRNA synthase complex-interacting multifunctional protein 2 isoform X2"/>
    <property type="match status" value="1"/>
</dbReference>
<dbReference type="Gene3D" id="1.20.1050.130">
    <property type="match status" value="1"/>
</dbReference>
<dbReference type="InterPro" id="IPR042360">
    <property type="entry name" value="AIMP2"/>
</dbReference>
<dbReference type="InterPro" id="IPR031889">
    <property type="entry name" value="AIMP2_LysRS-bd"/>
</dbReference>
<dbReference type="InterPro" id="IPR041503">
    <property type="entry name" value="AIMP2_thioredoxin"/>
</dbReference>
<dbReference type="InterPro" id="IPR036282">
    <property type="entry name" value="Glutathione-S-Trfase_C_sf"/>
</dbReference>
<dbReference type="InterPro" id="IPR004046">
    <property type="entry name" value="GST_C"/>
</dbReference>
<dbReference type="PANTHER" id="PTHR13438">
    <property type="entry name" value="AMINOACYL TRNA SYNTHASE COMPLEX-INTERACTING MULTIFUNCTIONAL PROTEIN"/>
    <property type="match status" value="1"/>
</dbReference>
<dbReference type="PANTHER" id="PTHR13438:SF2">
    <property type="entry name" value="AMINOACYL TRNA SYNTHASE COMPLEX-INTERACTING MULTIFUNCTIONAL PROTEIN 2"/>
    <property type="match status" value="1"/>
</dbReference>
<dbReference type="Pfam" id="PF16780">
    <property type="entry name" value="AIMP2_LysRS_bd"/>
    <property type="match status" value="1"/>
</dbReference>
<dbReference type="Pfam" id="PF00043">
    <property type="entry name" value="GST_C"/>
    <property type="match status" value="1"/>
</dbReference>
<dbReference type="Pfam" id="PF18569">
    <property type="entry name" value="Thioredoxin_16"/>
    <property type="match status" value="1"/>
</dbReference>
<dbReference type="SUPFAM" id="SSF47616">
    <property type="entry name" value="GST C-terminal domain-like"/>
    <property type="match status" value="1"/>
</dbReference>